<feature type="chain" id="PRO_0000143811" description="Protein BTG4">
    <location>
        <begin position="1"/>
        <end position="250"/>
    </location>
</feature>
<feature type="mutagenesis site" description="Loss of interaction with CNOT7." evidence="1">
    <original>H</original>
    <variation>A</variation>
    <location>
        <position position="45"/>
    </location>
</feature>
<feature type="mutagenesis site" description="Loss of interaction with CNOT7." evidence="1">
    <original>W</original>
    <variation>A</variation>
    <location>
        <position position="46"/>
    </location>
</feature>
<feature type="mutagenesis site" description="No effect on interaction with CNOT7." evidence="1">
    <original>P</original>
    <variation>A</variation>
    <location>
        <position position="51"/>
    </location>
</feature>
<feature type="mutagenesis site" description="Loss of interaction with CNOT7." evidence="1">
    <original>R</original>
    <variation>A</variation>
    <location>
        <position position="58"/>
    </location>
</feature>
<feature type="mutagenesis site" description="Loss of interaction with CNOT7." evidence="1">
    <original>C</original>
    <variation>A</variation>
    <location>
        <position position="59"/>
    </location>
</feature>
<feature type="mutagenesis site" description="Loss of interaction with CNOT7." evidence="1">
    <original>D</original>
    <variation>A</variation>
    <location>
        <position position="69"/>
    </location>
</feature>
<feature type="mutagenesis site" description="Loss of interaction with CNOT7 and CNOT8. No effect on interaction with EIF4E." evidence="1">
    <original>W</original>
    <variation>A</variation>
    <location>
        <position position="95"/>
    </location>
</feature>
<feature type="mutagenesis site" description="No effect on interaction with CNOT7." evidence="1">
    <original>E</original>
    <variation>A</variation>
    <location>
        <position position="100"/>
    </location>
</feature>
<feature type="mutagenesis site" description="Loss of interaction with CNOT7." evidence="1">
    <original>E</original>
    <variation>A</variation>
    <location>
        <position position="107"/>
    </location>
</feature>
<feature type="sequence conflict" description="In Ref. 1; CAA06384." evidence="2" ref="1">
    <original>I</original>
    <variation>V</variation>
    <location>
        <position position="37"/>
    </location>
</feature>
<feature type="sequence conflict" description="In Ref. 1; CAA06384." evidence="2" ref="1">
    <original>I</original>
    <variation>V</variation>
    <location>
        <position position="158"/>
    </location>
</feature>
<dbReference type="EMBL" id="AJ005120">
    <property type="protein sequence ID" value="CAA06384.1"/>
    <property type="molecule type" value="mRNA"/>
</dbReference>
<dbReference type="EMBL" id="AB050983">
    <property type="protein sequence ID" value="BAB47554.2"/>
    <property type="molecule type" value="mRNA"/>
</dbReference>
<dbReference type="EMBL" id="AK136041">
    <property type="protein sequence ID" value="BAE22791.1"/>
    <property type="molecule type" value="mRNA"/>
</dbReference>
<dbReference type="EMBL" id="AK136149">
    <property type="protein sequence ID" value="BAE22846.1"/>
    <property type="molecule type" value="mRNA"/>
</dbReference>
<dbReference type="EMBL" id="AK161379">
    <property type="protein sequence ID" value="BAE36359.1"/>
    <property type="molecule type" value="mRNA"/>
</dbReference>
<dbReference type="EMBL" id="AC119831">
    <property type="status" value="NOT_ANNOTATED_CDS"/>
    <property type="molecule type" value="Genomic_DNA"/>
</dbReference>
<dbReference type="CCDS" id="CCDS40629.1"/>
<dbReference type="RefSeq" id="NP_001388021.1">
    <property type="nucleotide sequence ID" value="NM_001401092.1"/>
</dbReference>
<dbReference type="RefSeq" id="NP_062366.2">
    <property type="nucleotide sequence ID" value="NM_019493.4"/>
</dbReference>
<dbReference type="RefSeq" id="XP_006510562.1">
    <property type="nucleotide sequence ID" value="XM_006510499.4"/>
</dbReference>
<dbReference type="RefSeq" id="XP_006510563.1">
    <property type="nucleotide sequence ID" value="XM_006510500.4"/>
</dbReference>
<dbReference type="RefSeq" id="XP_006510564.1">
    <property type="nucleotide sequence ID" value="XM_006510501.4"/>
</dbReference>
<dbReference type="RefSeq" id="XP_006510565.1">
    <property type="nucleotide sequence ID" value="XM_006510502.3"/>
</dbReference>
<dbReference type="RefSeq" id="XP_017168979.1">
    <property type="nucleotide sequence ID" value="XM_017313490.2"/>
</dbReference>
<dbReference type="SMR" id="O70552"/>
<dbReference type="DIP" id="DIP-61987N"/>
<dbReference type="FunCoup" id="O70552">
    <property type="interactions" value="1431"/>
</dbReference>
<dbReference type="IntAct" id="O70552">
    <property type="interactions" value="4"/>
</dbReference>
<dbReference type="STRING" id="10090.ENSMUSP00000110074"/>
<dbReference type="PhosphoSitePlus" id="O70552"/>
<dbReference type="jPOST" id="O70552"/>
<dbReference type="PaxDb" id="10090-ENSMUSP00000110074"/>
<dbReference type="ProteomicsDB" id="265387"/>
<dbReference type="Antibodypedia" id="32035">
    <property type="antibodies" value="152 antibodies from 23 providers"/>
</dbReference>
<dbReference type="DNASU" id="56057"/>
<dbReference type="Ensembl" id="ENSMUST00000114431.4">
    <property type="protein sequence ID" value="ENSMUSP00000110074.3"/>
    <property type="gene ID" value="ENSMUSG00000032056.11"/>
</dbReference>
<dbReference type="Ensembl" id="ENSMUST00000213680.2">
    <property type="protein sequence ID" value="ENSMUSP00000149181.2"/>
    <property type="gene ID" value="ENSMUSG00000032056.11"/>
</dbReference>
<dbReference type="GeneID" id="56057"/>
<dbReference type="KEGG" id="mmu:56057"/>
<dbReference type="UCSC" id="uc009pld.1">
    <property type="organism name" value="mouse"/>
</dbReference>
<dbReference type="AGR" id="MGI:1860140"/>
<dbReference type="CTD" id="54766"/>
<dbReference type="MGI" id="MGI:1860140">
    <property type="gene designation" value="Btg4"/>
</dbReference>
<dbReference type="VEuPathDB" id="HostDB:ENSMUSG00000032056"/>
<dbReference type="eggNOG" id="KOG4006">
    <property type="taxonomic scope" value="Eukaryota"/>
</dbReference>
<dbReference type="GeneTree" id="ENSGT00950000182952"/>
<dbReference type="HOGENOM" id="CLU_079660_3_0_1"/>
<dbReference type="InParanoid" id="O70552"/>
<dbReference type="OrthoDB" id="19928at2759"/>
<dbReference type="PhylomeDB" id="O70552"/>
<dbReference type="TreeFam" id="TF105272"/>
<dbReference type="BioGRID-ORCS" id="56057">
    <property type="hits" value="1 hit in 60 CRISPR screens"/>
</dbReference>
<dbReference type="ChiTaRS" id="Btg4">
    <property type="organism name" value="mouse"/>
</dbReference>
<dbReference type="PRO" id="PR:O70552"/>
<dbReference type="Proteomes" id="UP000000589">
    <property type="component" value="Chromosome 9"/>
</dbReference>
<dbReference type="RNAct" id="O70552">
    <property type="molecule type" value="protein"/>
</dbReference>
<dbReference type="Bgee" id="ENSMUSG00000032056">
    <property type="expression patterns" value="Expressed in primary oocyte and 61 other cell types or tissues"/>
</dbReference>
<dbReference type="ExpressionAtlas" id="O70552">
    <property type="expression patterns" value="baseline and differential"/>
</dbReference>
<dbReference type="GO" id="GO:0005829">
    <property type="term" value="C:cytosol"/>
    <property type="evidence" value="ECO:0000304"/>
    <property type="project" value="Reactome"/>
</dbReference>
<dbReference type="GO" id="GO:0003730">
    <property type="term" value="F:mRNA 3'-UTR binding"/>
    <property type="evidence" value="ECO:0000314"/>
    <property type="project" value="MGI"/>
</dbReference>
<dbReference type="GO" id="GO:0160021">
    <property type="term" value="P:maternal-to-zygotic transition of gene expression"/>
    <property type="evidence" value="ECO:0000315"/>
    <property type="project" value="MGI"/>
</dbReference>
<dbReference type="GO" id="GO:0045930">
    <property type="term" value="P:negative regulation of mitotic cell cycle"/>
    <property type="evidence" value="ECO:0000314"/>
    <property type="project" value="MGI"/>
</dbReference>
<dbReference type="FunFam" id="3.90.640.90:FF:000002">
    <property type="entry name" value="BTG anti-proliferation factor 4"/>
    <property type="match status" value="1"/>
</dbReference>
<dbReference type="Gene3D" id="3.90.640.90">
    <property type="entry name" value="Anti-proliferative protein, N-terminal domain"/>
    <property type="match status" value="1"/>
</dbReference>
<dbReference type="InterPro" id="IPR002087">
    <property type="entry name" value="Anti_prolifrtn"/>
</dbReference>
<dbReference type="InterPro" id="IPR033332">
    <property type="entry name" value="BTG"/>
</dbReference>
<dbReference type="InterPro" id="IPR036054">
    <property type="entry name" value="BTG-like_sf"/>
</dbReference>
<dbReference type="PANTHER" id="PTHR22978">
    <property type="entry name" value="B-CELL TRANSLOCATION GENE"/>
    <property type="match status" value="1"/>
</dbReference>
<dbReference type="PANTHER" id="PTHR22978:SF5">
    <property type="entry name" value="PROTEIN BTG4"/>
    <property type="match status" value="1"/>
</dbReference>
<dbReference type="Pfam" id="PF07742">
    <property type="entry name" value="BTG"/>
    <property type="match status" value="1"/>
</dbReference>
<dbReference type="PRINTS" id="PR00310">
    <property type="entry name" value="ANTIPRLFBTG1"/>
</dbReference>
<dbReference type="SMART" id="SM00099">
    <property type="entry name" value="btg1"/>
    <property type="match status" value="1"/>
</dbReference>
<dbReference type="SUPFAM" id="SSF160696">
    <property type="entry name" value="BTG domain-like"/>
    <property type="match status" value="1"/>
</dbReference>
<dbReference type="PROSITE" id="PS00960">
    <property type="entry name" value="BTG_1"/>
    <property type="match status" value="1"/>
</dbReference>
<dbReference type="PROSITE" id="PS01203">
    <property type="entry name" value="BTG_2"/>
    <property type="match status" value="1"/>
</dbReference>
<evidence type="ECO:0000269" key="1">
    <source>
    </source>
</evidence>
<evidence type="ECO:0000305" key="2"/>
<organism>
    <name type="scientific">Mus musculus</name>
    <name type="common">Mouse</name>
    <dbReference type="NCBI Taxonomy" id="10090"/>
    <lineage>
        <taxon>Eukaryota</taxon>
        <taxon>Metazoa</taxon>
        <taxon>Chordata</taxon>
        <taxon>Craniata</taxon>
        <taxon>Vertebrata</taxon>
        <taxon>Euteleostomi</taxon>
        <taxon>Mammalia</taxon>
        <taxon>Eutheria</taxon>
        <taxon>Euarchontoglires</taxon>
        <taxon>Glires</taxon>
        <taxon>Rodentia</taxon>
        <taxon>Myomorpha</taxon>
        <taxon>Muroidea</taxon>
        <taxon>Muridae</taxon>
        <taxon>Murinae</taxon>
        <taxon>Mus</taxon>
        <taxon>Mus</taxon>
    </lineage>
</organism>
<protein>
    <recommendedName>
        <fullName>Protein BTG4</fullName>
    </recommendedName>
    <alternativeName>
        <fullName>BTG family member 4</fullName>
    </alternativeName>
    <alternativeName>
        <fullName>Protein PC3b</fullName>
    </alternativeName>
</protein>
<comment type="function">
    <text evidence="1">Adapter protein that bridges CNOT7, a catalytic subunit of the CCR4-NOT complex, to EIF4E, and facilitates maternal mRNAs decay during the maturation of oocytes and in the fertilized egg (PubMed:27065194). It is therefore required for the maternal-zygotic transition (MZT), zygotic cleavage and initiation of embryonic development (PubMed:27065194).</text>
</comment>
<comment type="subunit">
    <text evidence="1">Interacts with CNOT7 and EIF4E (PubMed:27065194). Interacts with CNOT8 (PubMed:27065194).</text>
</comment>
<comment type="interaction">
    <interactant intactId="EBI-16204405">
        <id>O70552</id>
    </interactant>
    <interactant intactId="EBI-2104739">
        <id>Q60809</id>
        <label>Cnot7</label>
    </interactant>
    <organismsDiffer>false</organismsDiffer>
    <experiments>6</experiments>
</comment>
<comment type="interaction">
    <interactant intactId="EBI-16204405">
        <id>O70552</id>
    </interactant>
    <interactant intactId="EBI-73440">
        <id>P06730</id>
        <label>EIF4E</label>
    </interactant>
    <organismsDiffer>true</organismsDiffer>
    <experiments>4</experiments>
</comment>
<comment type="tissue specificity">
    <text evidence="1">Expressed in oocytes (PubMed:27065194). Expressed in testis and in olfactory epithelium.</text>
</comment>
<comment type="disruption phenotype">
    <text evidence="1">BTG4-null mice are viable, have body sizes similar to those of their wild type littermates, are healthy up to 1 year of age, and do not spontaneously develop tumors. Females are sterile and their embryos are arrested at the one- or two-cells stage.</text>
</comment>
<comment type="similarity">
    <text evidence="2">Belongs to the BTG family.</text>
</comment>
<gene>
    <name type="primary">Btg4</name>
    <name type="synonym">Pc3b</name>
</gene>
<name>BTG4_MOUSE</name>
<keyword id="KW-1185">Reference proteome</keyword>
<sequence>MRDEIATAVFFVTRLVKKHEKLSTQQIETFALKLMTILFEKYRGHWHPDCPSKGQAFRCIRINNNENKDPVLERACAESNVNFFHLGLPKEMTIWVDPYEVCCRYGEKKHPFTIASFKGRWENWELAQHVSCAVNRATGDCSSGTSSDEESCSREAQIIPKVNNPKSVYQVENFKQSLQPWFCLPRRKHLADGRGFLPGAACHPVPKSSKWCRPASRRVDRYHWVNAQLFSGQTAPGEPGEEALSSLKQK</sequence>
<accession>O70552</accession>
<accession>Q925T9</accession>
<reference key="1">
    <citation type="journal article" date="2000" name="Genomics">
        <title>Cloning of PC3B, a novel member of the PC3/BTG/TOB family of growth inhibitory genes, highly expressed in the olfactory epithelium.</title>
        <authorList>
            <person name="Buanne P."/>
            <person name="Corrente G."/>
            <person name="Micheli L."/>
            <person name="Palena A."/>
            <person name="Lavia P."/>
            <person name="Spadafora C."/>
            <person name="Lakshmana M.K."/>
            <person name="Rinaldi A."/>
            <person name="Banfi S."/>
            <person name="Quarto M."/>
            <person name="Bulfone A."/>
            <person name="Tirone F."/>
        </authorList>
    </citation>
    <scope>NUCLEOTIDE SEQUENCE [MRNA]</scope>
    <source>
        <tissue>Embryo</tissue>
    </source>
</reference>
<reference key="2">
    <citation type="submission" date="2000-11" db="EMBL/GenBank/DDBJ databases">
        <title>The initiate factors from mouse oocyte.</title>
        <authorList>
            <person name="Mano H."/>
        </authorList>
    </citation>
    <scope>NUCLEOTIDE SEQUENCE [MRNA]</scope>
</reference>
<reference key="3">
    <citation type="journal article" date="2005" name="Science">
        <title>The transcriptional landscape of the mammalian genome.</title>
        <authorList>
            <person name="Carninci P."/>
            <person name="Kasukawa T."/>
            <person name="Katayama S."/>
            <person name="Gough J."/>
            <person name="Frith M.C."/>
            <person name="Maeda N."/>
            <person name="Oyama R."/>
            <person name="Ravasi T."/>
            <person name="Lenhard B."/>
            <person name="Wells C."/>
            <person name="Kodzius R."/>
            <person name="Shimokawa K."/>
            <person name="Bajic V.B."/>
            <person name="Brenner S.E."/>
            <person name="Batalov S."/>
            <person name="Forrest A.R."/>
            <person name="Zavolan M."/>
            <person name="Davis M.J."/>
            <person name="Wilming L.G."/>
            <person name="Aidinis V."/>
            <person name="Allen J.E."/>
            <person name="Ambesi-Impiombato A."/>
            <person name="Apweiler R."/>
            <person name="Aturaliya R.N."/>
            <person name="Bailey T.L."/>
            <person name="Bansal M."/>
            <person name="Baxter L."/>
            <person name="Beisel K.W."/>
            <person name="Bersano T."/>
            <person name="Bono H."/>
            <person name="Chalk A.M."/>
            <person name="Chiu K.P."/>
            <person name="Choudhary V."/>
            <person name="Christoffels A."/>
            <person name="Clutterbuck D.R."/>
            <person name="Crowe M.L."/>
            <person name="Dalla E."/>
            <person name="Dalrymple B.P."/>
            <person name="de Bono B."/>
            <person name="Della Gatta G."/>
            <person name="di Bernardo D."/>
            <person name="Down T."/>
            <person name="Engstrom P."/>
            <person name="Fagiolini M."/>
            <person name="Faulkner G."/>
            <person name="Fletcher C.F."/>
            <person name="Fukushima T."/>
            <person name="Furuno M."/>
            <person name="Futaki S."/>
            <person name="Gariboldi M."/>
            <person name="Georgii-Hemming P."/>
            <person name="Gingeras T.R."/>
            <person name="Gojobori T."/>
            <person name="Green R.E."/>
            <person name="Gustincich S."/>
            <person name="Harbers M."/>
            <person name="Hayashi Y."/>
            <person name="Hensch T.K."/>
            <person name="Hirokawa N."/>
            <person name="Hill D."/>
            <person name="Huminiecki L."/>
            <person name="Iacono M."/>
            <person name="Ikeo K."/>
            <person name="Iwama A."/>
            <person name="Ishikawa T."/>
            <person name="Jakt M."/>
            <person name="Kanapin A."/>
            <person name="Katoh M."/>
            <person name="Kawasawa Y."/>
            <person name="Kelso J."/>
            <person name="Kitamura H."/>
            <person name="Kitano H."/>
            <person name="Kollias G."/>
            <person name="Krishnan S.P."/>
            <person name="Kruger A."/>
            <person name="Kummerfeld S.K."/>
            <person name="Kurochkin I.V."/>
            <person name="Lareau L.F."/>
            <person name="Lazarevic D."/>
            <person name="Lipovich L."/>
            <person name="Liu J."/>
            <person name="Liuni S."/>
            <person name="McWilliam S."/>
            <person name="Madan Babu M."/>
            <person name="Madera M."/>
            <person name="Marchionni L."/>
            <person name="Matsuda H."/>
            <person name="Matsuzawa S."/>
            <person name="Miki H."/>
            <person name="Mignone F."/>
            <person name="Miyake S."/>
            <person name="Morris K."/>
            <person name="Mottagui-Tabar S."/>
            <person name="Mulder N."/>
            <person name="Nakano N."/>
            <person name="Nakauchi H."/>
            <person name="Ng P."/>
            <person name="Nilsson R."/>
            <person name="Nishiguchi S."/>
            <person name="Nishikawa S."/>
            <person name="Nori F."/>
            <person name="Ohara O."/>
            <person name="Okazaki Y."/>
            <person name="Orlando V."/>
            <person name="Pang K.C."/>
            <person name="Pavan W.J."/>
            <person name="Pavesi G."/>
            <person name="Pesole G."/>
            <person name="Petrovsky N."/>
            <person name="Piazza S."/>
            <person name="Reed J."/>
            <person name="Reid J.F."/>
            <person name="Ring B.Z."/>
            <person name="Ringwald M."/>
            <person name="Rost B."/>
            <person name="Ruan Y."/>
            <person name="Salzberg S.L."/>
            <person name="Sandelin A."/>
            <person name="Schneider C."/>
            <person name="Schoenbach C."/>
            <person name="Sekiguchi K."/>
            <person name="Semple C.A."/>
            <person name="Seno S."/>
            <person name="Sessa L."/>
            <person name="Sheng Y."/>
            <person name="Shibata Y."/>
            <person name="Shimada H."/>
            <person name="Shimada K."/>
            <person name="Silva D."/>
            <person name="Sinclair B."/>
            <person name="Sperling S."/>
            <person name="Stupka E."/>
            <person name="Sugiura K."/>
            <person name="Sultana R."/>
            <person name="Takenaka Y."/>
            <person name="Taki K."/>
            <person name="Tammoja K."/>
            <person name="Tan S.L."/>
            <person name="Tang S."/>
            <person name="Taylor M.S."/>
            <person name="Tegner J."/>
            <person name="Teichmann S.A."/>
            <person name="Ueda H.R."/>
            <person name="van Nimwegen E."/>
            <person name="Verardo R."/>
            <person name="Wei C.L."/>
            <person name="Yagi K."/>
            <person name="Yamanishi H."/>
            <person name="Zabarovsky E."/>
            <person name="Zhu S."/>
            <person name="Zimmer A."/>
            <person name="Hide W."/>
            <person name="Bult C."/>
            <person name="Grimmond S.M."/>
            <person name="Teasdale R.D."/>
            <person name="Liu E.T."/>
            <person name="Brusic V."/>
            <person name="Quackenbush J."/>
            <person name="Wahlestedt C."/>
            <person name="Mattick J.S."/>
            <person name="Hume D.A."/>
            <person name="Kai C."/>
            <person name="Sasaki D."/>
            <person name="Tomaru Y."/>
            <person name="Fukuda S."/>
            <person name="Kanamori-Katayama M."/>
            <person name="Suzuki M."/>
            <person name="Aoki J."/>
            <person name="Arakawa T."/>
            <person name="Iida J."/>
            <person name="Imamura K."/>
            <person name="Itoh M."/>
            <person name="Kato T."/>
            <person name="Kawaji H."/>
            <person name="Kawagashira N."/>
            <person name="Kawashima T."/>
            <person name="Kojima M."/>
            <person name="Kondo S."/>
            <person name="Konno H."/>
            <person name="Nakano K."/>
            <person name="Ninomiya N."/>
            <person name="Nishio T."/>
            <person name="Okada M."/>
            <person name="Plessy C."/>
            <person name="Shibata K."/>
            <person name="Shiraki T."/>
            <person name="Suzuki S."/>
            <person name="Tagami M."/>
            <person name="Waki K."/>
            <person name="Watahiki A."/>
            <person name="Okamura-Oho Y."/>
            <person name="Suzuki H."/>
            <person name="Kawai J."/>
            <person name="Hayashizaki Y."/>
        </authorList>
    </citation>
    <scope>NUCLEOTIDE SEQUENCE [LARGE SCALE MRNA]</scope>
    <source>
        <strain>C57BL/6J</strain>
        <tissue>Egg</tissue>
        <tissue>Testis</tissue>
    </source>
</reference>
<reference key="4">
    <citation type="journal article" date="2009" name="PLoS Biol.">
        <title>Lineage-specific biology revealed by a finished genome assembly of the mouse.</title>
        <authorList>
            <person name="Church D.M."/>
            <person name="Goodstadt L."/>
            <person name="Hillier L.W."/>
            <person name="Zody M.C."/>
            <person name="Goldstein S."/>
            <person name="She X."/>
            <person name="Bult C.J."/>
            <person name="Agarwala R."/>
            <person name="Cherry J.L."/>
            <person name="DiCuccio M."/>
            <person name="Hlavina W."/>
            <person name="Kapustin Y."/>
            <person name="Meric P."/>
            <person name="Maglott D."/>
            <person name="Birtle Z."/>
            <person name="Marques A.C."/>
            <person name="Graves T."/>
            <person name="Zhou S."/>
            <person name="Teague B."/>
            <person name="Potamousis K."/>
            <person name="Churas C."/>
            <person name="Place M."/>
            <person name="Herschleb J."/>
            <person name="Runnheim R."/>
            <person name="Forrest D."/>
            <person name="Amos-Landgraf J."/>
            <person name="Schwartz D.C."/>
            <person name="Cheng Z."/>
            <person name="Lindblad-Toh K."/>
            <person name="Eichler E.E."/>
            <person name="Ponting C.P."/>
        </authorList>
    </citation>
    <scope>NUCLEOTIDE SEQUENCE [LARGE SCALE GENOMIC DNA]</scope>
    <source>
        <strain>C57BL/6J</strain>
    </source>
</reference>
<reference key="5">
    <citation type="journal article" date="2016" name="Nat. Struct. Mol. Biol.">
        <title>BTG4 is a meiotic cell cycle-coupled maternal-zygotic-transition licensing factor in oocytes.</title>
        <authorList>
            <person name="Yu C."/>
            <person name="Ji S.Y."/>
            <person name="Sha Q.Q."/>
            <person name="Dang Y."/>
            <person name="Zhou J.J."/>
            <person name="Zhang Y.L."/>
            <person name="Liu Y."/>
            <person name="Wang Z.W."/>
            <person name="Hu B."/>
            <person name="Sun Q.Y."/>
            <person name="Sun S.C."/>
            <person name="Tang F."/>
            <person name="Fan H.Y."/>
        </authorList>
    </citation>
    <scope>FUNCTION</scope>
    <scope>DISRUPTION PHENOTYPE</scope>
    <scope>TISSUE SPECIFICITY</scope>
    <scope>INTERACTION WITH CNOT7; CNOT8 AND EIF4E</scope>
    <scope>MUTAGENESIS OF HIS-45; TRP-46; PRO-51; ARG-58; CYS-59; ASP-69; TRP-95; GLU-100 AND GLU-107</scope>
</reference>
<proteinExistence type="evidence at protein level"/>